<accession>A7X1T3</accession>
<sequence>MNEEQRKASSVDVLAERDKKAEKDYSKYFEHVYQPPNLKEAKKRGKQEVRYNRDFQIDEKYRGMGNERTFLIKTYGCQMNAHDTEVIAGILEALGYQATTDINTADVILINTCAIRENAENKVFSEIGNLKHLKKERPDILIGVCGCMSQEESVVNKILKSYQNVDMIFGTHNIHHLPEILEEAYLSKAMVVEVWSKEGDVIENLPKVREGNIKAWVNIMYGCDKFCTYCIVPFTRGKERSRRPEDIIDEVRELAREGYKEITLLGQNVNSYGKDLQDIEYDLGDLLQAISKIAIPRVRFTTSHPWDFTDHMIDVISEGGNIVPHIHLPVQSGNNAVLKIMGRKYTRESYLDLVKRIKDRIPNVALTTDIIVGYPNESEEQFEETLTLYDEVGFEHAYTYLYSQRDGTPAAKMKDNVPLNVKKERLQRLNKKVGHYSQIAMSKYEGQTVTVLCEGSSKKDDQVLAGYTDKNKLVNFKAPKEMIGKLVEVRIDEAKQYSLNGSFVKEVEPEMVIQ</sequence>
<name>MIAB_STAA1</name>
<reference key="1">
    <citation type="journal article" date="2008" name="Antimicrob. Agents Chemother.">
        <title>Mutated response regulator graR is responsible for phenotypic conversion of Staphylococcus aureus from heterogeneous vancomycin-intermediate resistance to vancomycin-intermediate resistance.</title>
        <authorList>
            <person name="Neoh H.-M."/>
            <person name="Cui L."/>
            <person name="Yuzawa H."/>
            <person name="Takeuchi F."/>
            <person name="Matsuo M."/>
            <person name="Hiramatsu K."/>
        </authorList>
    </citation>
    <scope>NUCLEOTIDE SEQUENCE [LARGE SCALE GENOMIC DNA]</scope>
    <source>
        <strain>Mu3 / ATCC 700698</strain>
    </source>
</reference>
<keyword id="KW-0004">4Fe-4S</keyword>
<keyword id="KW-0963">Cytoplasm</keyword>
<keyword id="KW-0408">Iron</keyword>
<keyword id="KW-0411">Iron-sulfur</keyword>
<keyword id="KW-0479">Metal-binding</keyword>
<keyword id="KW-0949">S-adenosyl-L-methionine</keyword>
<keyword id="KW-0808">Transferase</keyword>
<keyword id="KW-0819">tRNA processing</keyword>
<gene>
    <name evidence="1" type="primary">miaB</name>
    <name type="ordered locus">SAHV_1282</name>
</gene>
<protein>
    <recommendedName>
        <fullName evidence="1">tRNA-2-methylthio-N(6)-dimethylallyladenosine synthase</fullName>
        <ecNumber evidence="1">2.8.4.3</ecNumber>
    </recommendedName>
    <alternativeName>
        <fullName evidence="1">(Dimethylallyl)adenosine tRNA methylthiotransferase MiaB</fullName>
    </alternativeName>
    <alternativeName>
        <fullName evidence="1">tRNA-i(6)A37 methylthiotransferase</fullName>
    </alternativeName>
</protein>
<comment type="function">
    <text evidence="1">Catalyzes the methylthiolation of N6-(dimethylallyl)adenosine (i(6)A), leading to the formation of 2-methylthio-N6-(dimethylallyl)adenosine (ms(2)i(6)A) at position 37 in tRNAs that read codons beginning with uridine.</text>
</comment>
<comment type="catalytic activity">
    <reaction evidence="1">
        <text>N(6)-dimethylallyladenosine(37) in tRNA + (sulfur carrier)-SH + AH2 + 2 S-adenosyl-L-methionine = 2-methylsulfanyl-N(6)-dimethylallyladenosine(37) in tRNA + (sulfur carrier)-H + 5'-deoxyadenosine + L-methionine + A + S-adenosyl-L-homocysteine + 2 H(+)</text>
        <dbReference type="Rhea" id="RHEA:37067"/>
        <dbReference type="Rhea" id="RHEA-COMP:10375"/>
        <dbReference type="Rhea" id="RHEA-COMP:10376"/>
        <dbReference type="Rhea" id="RHEA-COMP:14737"/>
        <dbReference type="Rhea" id="RHEA-COMP:14739"/>
        <dbReference type="ChEBI" id="CHEBI:13193"/>
        <dbReference type="ChEBI" id="CHEBI:15378"/>
        <dbReference type="ChEBI" id="CHEBI:17319"/>
        <dbReference type="ChEBI" id="CHEBI:17499"/>
        <dbReference type="ChEBI" id="CHEBI:29917"/>
        <dbReference type="ChEBI" id="CHEBI:57844"/>
        <dbReference type="ChEBI" id="CHEBI:57856"/>
        <dbReference type="ChEBI" id="CHEBI:59789"/>
        <dbReference type="ChEBI" id="CHEBI:64428"/>
        <dbReference type="ChEBI" id="CHEBI:74415"/>
        <dbReference type="ChEBI" id="CHEBI:74417"/>
        <dbReference type="EC" id="2.8.4.3"/>
    </reaction>
</comment>
<comment type="cofactor">
    <cofactor evidence="1">
        <name>[4Fe-4S] cluster</name>
        <dbReference type="ChEBI" id="CHEBI:49883"/>
    </cofactor>
    <text evidence="1">Binds 2 [4Fe-4S] clusters. One cluster is coordinated with 3 cysteines and an exchangeable S-adenosyl-L-methionine.</text>
</comment>
<comment type="subunit">
    <text evidence="1">Monomer.</text>
</comment>
<comment type="subcellular location">
    <subcellularLocation>
        <location evidence="1">Cytoplasm</location>
    </subcellularLocation>
</comment>
<comment type="similarity">
    <text evidence="1">Belongs to the methylthiotransferase family. MiaB subfamily.</text>
</comment>
<dbReference type="EC" id="2.8.4.3" evidence="1"/>
<dbReference type="EMBL" id="AP009324">
    <property type="protein sequence ID" value="BAF78165.1"/>
    <property type="molecule type" value="Genomic_DNA"/>
</dbReference>
<dbReference type="RefSeq" id="WP_001001524.1">
    <property type="nucleotide sequence ID" value="NC_009782.1"/>
</dbReference>
<dbReference type="SMR" id="A7X1T3"/>
<dbReference type="KEGG" id="saw:SAHV_1282"/>
<dbReference type="HOGENOM" id="CLU_018697_2_0_9"/>
<dbReference type="GO" id="GO:0005829">
    <property type="term" value="C:cytosol"/>
    <property type="evidence" value="ECO:0007669"/>
    <property type="project" value="TreeGrafter"/>
</dbReference>
<dbReference type="GO" id="GO:0051539">
    <property type="term" value="F:4 iron, 4 sulfur cluster binding"/>
    <property type="evidence" value="ECO:0007669"/>
    <property type="project" value="UniProtKB-UniRule"/>
</dbReference>
<dbReference type="GO" id="GO:0046872">
    <property type="term" value="F:metal ion binding"/>
    <property type="evidence" value="ECO:0007669"/>
    <property type="project" value="UniProtKB-KW"/>
</dbReference>
<dbReference type="GO" id="GO:0035597">
    <property type="term" value="F:N6-isopentenyladenosine methylthiotransferase activity"/>
    <property type="evidence" value="ECO:0007669"/>
    <property type="project" value="TreeGrafter"/>
</dbReference>
<dbReference type="CDD" id="cd01335">
    <property type="entry name" value="Radical_SAM"/>
    <property type="match status" value="1"/>
</dbReference>
<dbReference type="FunFam" id="3.40.50.12160:FF:000006">
    <property type="entry name" value="tRNA-2-methylthio-N(6)-dimethylallyladenosine synthase"/>
    <property type="match status" value="1"/>
</dbReference>
<dbReference type="FunFam" id="3.80.30.20:FF:000001">
    <property type="entry name" value="tRNA-2-methylthio-N(6)-dimethylallyladenosine synthase 2"/>
    <property type="match status" value="1"/>
</dbReference>
<dbReference type="Gene3D" id="3.40.50.12160">
    <property type="entry name" value="Methylthiotransferase, N-terminal domain"/>
    <property type="match status" value="1"/>
</dbReference>
<dbReference type="Gene3D" id="3.80.30.20">
    <property type="entry name" value="tm_1862 like domain"/>
    <property type="match status" value="1"/>
</dbReference>
<dbReference type="HAMAP" id="MF_01864">
    <property type="entry name" value="tRNA_metthiotr_MiaB"/>
    <property type="match status" value="1"/>
</dbReference>
<dbReference type="InterPro" id="IPR006638">
    <property type="entry name" value="Elp3/MiaA/NifB-like_rSAM"/>
</dbReference>
<dbReference type="InterPro" id="IPR005839">
    <property type="entry name" value="Methylthiotransferase"/>
</dbReference>
<dbReference type="InterPro" id="IPR020612">
    <property type="entry name" value="Methylthiotransferase_CS"/>
</dbReference>
<dbReference type="InterPro" id="IPR013848">
    <property type="entry name" value="Methylthiotransferase_N"/>
</dbReference>
<dbReference type="InterPro" id="IPR038135">
    <property type="entry name" value="Methylthiotransferase_N_sf"/>
</dbReference>
<dbReference type="InterPro" id="IPR006463">
    <property type="entry name" value="MiaB_methiolase"/>
</dbReference>
<dbReference type="InterPro" id="IPR007197">
    <property type="entry name" value="rSAM"/>
</dbReference>
<dbReference type="InterPro" id="IPR023404">
    <property type="entry name" value="rSAM_horseshoe"/>
</dbReference>
<dbReference type="InterPro" id="IPR002792">
    <property type="entry name" value="TRAM_dom"/>
</dbReference>
<dbReference type="NCBIfam" id="TIGR01574">
    <property type="entry name" value="miaB-methiolase"/>
    <property type="match status" value="1"/>
</dbReference>
<dbReference type="NCBIfam" id="TIGR00089">
    <property type="entry name" value="MiaB/RimO family radical SAM methylthiotransferase"/>
    <property type="match status" value="1"/>
</dbReference>
<dbReference type="PANTHER" id="PTHR43020">
    <property type="entry name" value="CDK5 REGULATORY SUBUNIT-ASSOCIATED PROTEIN 1"/>
    <property type="match status" value="1"/>
</dbReference>
<dbReference type="PANTHER" id="PTHR43020:SF2">
    <property type="entry name" value="MITOCHONDRIAL TRNA METHYLTHIOTRANSFERASE CDK5RAP1"/>
    <property type="match status" value="1"/>
</dbReference>
<dbReference type="Pfam" id="PF04055">
    <property type="entry name" value="Radical_SAM"/>
    <property type="match status" value="1"/>
</dbReference>
<dbReference type="Pfam" id="PF01938">
    <property type="entry name" value="TRAM"/>
    <property type="match status" value="1"/>
</dbReference>
<dbReference type="Pfam" id="PF00919">
    <property type="entry name" value="UPF0004"/>
    <property type="match status" value="1"/>
</dbReference>
<dbReference type="SFLD" id="SFLDF00273">
    <property type="entry name" value="(dimethylallyl)adenosine_tRNA"/>
    <property type="match status" value="1"/>
</dbReference>
<dbReference type="SFLD" id="SFLDG01082">
    <property type="entry name" value="B12-binding_domain_containing"/>
    <property type="match status" value="1"/>
</dbReference>
<dbReference type="SFLD" id="SFLDS00029">
    <property type="entry name" value="Radical_SAM"/>
    <property type="match status" value="1"/>
</dbReference>
<dbReference type="SMART" id="SM00729">
    <property type="entry name" value="Elp3"/>
    <property type="match status" value="1"/>
</dbReference>
<dbReference type="SUPFAM" id="SSF102114">
    <property type="entry name" value="Radical SAM enzymes"/>
    <property type="match status" value="1"/>
</dbReference>
<dbReference type="PROSITE" id="PS51449">
    <property type="entry name" value="MTTASE_N"/>
    <property type="match status" value="1"/>
</dbReference>
<dbReference type="PROSITE" id="PS01278">
    <property type="entry name" value="MTTASE_RADICAL"/>
    <property type="match status" value="1"/>
</dbReference>
<dbReference type="PROSITE" id="PS51918">
    <property type="entry name" value="RADICAL_SAM"/>
    <property type="match status" value="1"/>
</dbReference>
<dbReference type="PROSITE" id="PS50926">
    <property type="entry name" value="TRAM"/>
    <property type="match status" value="1"/>
</dbReference>
<evidence type="ECO:0000255" key="1">
    <source>
        <dbReference type="HAMAP-Rule" id="MF_01864"/>
    </source>
</evidence>
<evidence type="ECO:0000255" key="2">
    <source>
        <dbReference type="PROSITE-ProRule" id="PRU01266"/>
    </source>
</evidence>
<evidence type="ECO:0000256" key="3">
    <source>
        <dbReference type="SAM" id="MobiDB-lite"/>
    </source>
</evidence>
<organism>
    <name type="scientific">Staphylococcus aureus (strain Mu3 / ATCC 700698)</name>
    <dbReference type="NCBI Taxonomy" id="418127"/>
    <lineage>
        <taxon>Bacteria</taxon>
        <taxon>Bacillati</taxon>
        <taxon>Bacillota</taxon>
        <taxon>Bacilli</taxon>
        <taxon>Bacillales</taxon>
        <taxon>Staphylococcaceae</taxon>
        <taxon>Staphylococcus</taxon>
    </lineage>
</organism>
<proteinExistence type="inferred from homology"/>
<feature type="chain" id="PRO_0000374570" description="tRNA-2-methylthio-N(6)-dimethylallyladenosine synthase">
    <location>
        <begin position="1"/>
        <end position="514"/>
    </location>
</feature>
<feature type="domain" description="MTTase N-terminal" evidence="1">
    <location>
        <begin position="68"/>
        <end position="186"/>
    </location>
</feature>
<feature type="domain" description="Radical SAM core" evidence="2">
    <location>
        <begin position="209"/>
        <end position="440"/>
    </location>
</feature>
<feature type="domain" description="TRAM" evidence="1">
    <location>
        <begin position="442"/>
        <end position="505"/>
    </location>
</feature>
<feature type="region of interest" description="Disordered" evidence="3">
    <location>
        <begin position="1"/>
        <end position="21"/>
    </location>
</feature>
<feature type="binding site" evidence="1">
    <location>
        <position position="77"/>
    </location>
    <ligand>
        <name>[4Fe-4S] cluster</name>
        <dbReference type="ChEBI" id="CHEBI:49883"/>
        <label>1</label>
    </ligand>
</feature>
<feature type="binding site" evidence="1">
    <location>
        <position position="113"/>
    </location>
    <ligand>
        <name>[4Fe-4S] cluster</name>
        <dbReference type="ChEBI" id="CHEBI:49883"/>
        <label>1</label>
    </ligand>
</feature>
<feature type="binding site" evidence="1">
    <location>
        <position position="147"/>
    </location>
    <ligand>
        <name>[4Fe-4S] cluster</name>
        <dbReference type="ChEBI" id="CHEBI:49883"/>
        <label>1</label>
    </ligand>
</feature>
<feature type="binding site" evidence="1">
    <location>
        <position position="223"/>
    </location>
    <ligand>
        <name>[4Fe-4S] cluster</name>
        <dbReference type="ChEBI" id="CHEBI:49883"/>
        <label>2</label>
        <note>4Fe-4S-S-AdoMet</note>
    </ligand>
</feature>
<feature type="binding site" evidence="1">
    <location>
        <position position="227"/>
    </location>
    <ligand>
        <name>[4Fe-4S] cluster</name>
        <dbReference type="ChEBI" id="CHEBI:49883"/>
        <label>2</label>
        <note>4Fe-4S-S-AdoMet</note>
    </ligand>
</feature>
<feature type="binding site" evidence="1">
    <location>
        <position position="230"/>
    </location>
    <ligand>
        <name>[4Fe-4S] cluster</name>
        <dbReference type="ChEBI" id="CHEBI:49883"/>
        <label>2</label>
        <note>4Fe-4S-S-AdoMet</note>
    </ligand>
</feature>